<evidence type="ECO:0000255" key="1">
    <source>
        <dbReference type="HAMAP-Rule" id="MF_00802"/>
    </source>
</evidence>
<proteinExistence type="inferred from homology"/>
<gene>
    <name evidence="1" type="primary">glnE</name>
    <name type="ordered locus">RPA1933</name>
</gene>
<organism>
    <name type="scientific">Rhodopseudomonas palustris (strain ATCC BAA-98 / CGA009)</name>
    <dbReference type="NCBI Taxonomy" id="258594"/>
    <lineage>
        <taxon>Bacteria</taxon>
        <taxon>Pseudomonadati</taxon>
        <taxon>Pseudomonadota</taxon>
        <taxon>Alphaproteobacteria</taxon>
        <taxon>Hyphomicrobiales</taxon>
        <taxon>Nitrobacteraceae</taxon>
        <taxon>Rhodopseudomonas</taxon>
    </lineage>
</organism>
<dbReference type="EC" id="2.7.7.89" evidence="1"/>
<dbReference type="EC" id="2.7.7.42" evidence="1"/>
<dbReference type="EMBL" id="BX572599">
    <property type="protein sequence ID" value="CAE27374.1"/>
    <property type="molecule type" value="Genomic_DNA"/>
</dbReference>
<dbReference type="RefSeq" id="WP_011157488.1">
    <property type="nucleotide sequence ID" value="NZ_CP116810.1"/>
</dbReference>
<dbReference type="SMR" id="Q6N8H0"/>
<dbReference type="STRING" id="258594.RPA1933"/>
<dbReference type="GeneID" id="66892976"/>
<dbReference type="eggNOG" id="COG1391">
    <property type="taxonomic scope" value="Bacteria"/>
</dbReference>
<dbReference type="HOGENOM" id="CLU_006233_0_0_5"/>
<dbReference type="PhylomeDB" id="Q6N8H0"/>
<dbReference type="GO" id="GO:0005829">
    <property type="term" value="C:cytosol"/>
    <property type="evidence" value="ECO:0007669"/>
    <property type="project" value="TreeGrafter"/>
</dbReference>
<dbReference type="GO" id="GO:0008882">
    <property type="term" value="F:[glutamate-ammonia-ligase] adenylyltransferase activity"/>
    <property type="evidence" value="ECO:0007669"/>
    <property type="project" value="UniProtKB-UniRule"/>
</dbReference>
<dbReference type="GO" id="GO:0047388">
    <property type="term" value="F:[glutamine synthetase]-adenylyl-L-tyrosine phosphorylase activity"/>
    <property type="evidence" value="ECO:0007669"/>
    <property type="project" value="UniProtKB-EC"/>
</dbReference>
<dbReference type="GO" id="GO:0005524">
    <property type="term" value="F:ATP binding"/>
    <property type="evidence" value="ECO:0007669"/>
    <property type="project" value="UniProtKB-UniRule"/>
</dbReference>
<dbReference type="GO" id="GO:0000287">
    <property type="term" value="F:magnesium ion binding"/>
    <property type="evidence" value="ECO:0007669"/>
    <property type="project" value="UniProtKB-UniRule"/>
</dbReference>
<dbReference type="GO" id="GO:0000820">
    <property type="term" value="P:regulation of glutamine family amino acid metabolic process"/>
    <property type="evidence" value="ECO:0007669"/>
    <property type="project" value="UniProtKB-UniRule"/>
</dbReference>
<dbReference type="CDD" id="cd05401">
    <property type="entry name" value="NT_GlnE_GlnD_like"/>
    <property type="match status" value="2"/>
</dbReference>
<dbReference type="FunFam" id="1.20.120.330:FF:000028">
    <property type="entry name" value="Bifunctional glutamine synthetase adenylyltransferase/adenylyl-removing enzyme"/>
    <property type="match status" value="1"/>
</dbReference>
<dbReference type="FunFam" id="3.30.460.10:FF:000081">
    <property type="entry name" value="Bifunctional glutamine synthetase adenylyltransferase/adenylyl-removing enzyme"/>
    <property type="match status" value="1"/>
</dbReference>
<dbReference type="Gene3D" id="1.20.120.1510">
    <property type="match status" value="1"/>
</dbReference>
<dbReference type="Gene3D" id="3.30.460.10">
    <property type="entry name" value="Beta Polymerase, domain 2"/>
    <property type="match status" value="2"/>
</dbReference>
<dbReference type="Gene3D" id="1.20.120.330">
    <property type="entry name" value="Nucleotidyltransferases domain 2"/>
    <property type="match status" value="2"/>
</dbReference>
<dbReference type="HAMAP" id="MF_00802">
    <property type="entry name" value="GlnE"/>
    <property type="match status" value="1"/>
</dbReference>
<dbReference type="InterPro" id="IPR023057">
    <property type="entry name" value="GlnE"/>
</dbReference>
<dbReference type="InterPro" id="IPR005190">
    <property type="entry name" value="GlnE_rpt_dom"/>
</dbReference>
<dbReference type="InterPro" id="IPR043519">
    <property type="entry name" value="NT_sf"/>
</dbReference>
<dbReference type="InterPro" id="IPR013546">
    <property type="entry name" value="PII_UdlTrfase/GS_AdlTrfase"/>
</dbReference>
<dbReference type="NCBIfam" id="NF008292">
    <property type="entry name" value="PRK11072.1"/>
    <property type="match status" value="1"/>
</dbReference>
<dbReference type="NCBIfam" id="NF010706">
    <property type="entry name" value="PRK14108.1"/>
    <property type="match status" value="1"/>
</dbReference>
<dbReference type="PANTHER" id="PTHR30621:SF0">
    <property type="entry name" value="BIFUNCTIONAL GLUTAMINE SYNTHETASE ADENYLYLTRANSFERASE_ADENYLYL-REMOVING ENZYME"/>
    <property type="match status" value="1"/>
</dbReference>
<dbReference type="PANTHER" id="PTHR30621">
    <property type="entry name" value="GLUTAMINE SYNTHETASE ADENYLYLTRANSFERASE"/>
    <property type="match status" value="1"/>
</dbReference>
<dbReference type="Pfam" id="PF08335">
    <property type="entry name" value="GlnD_UR_UTase"/>
    <property type="match status" value="2"/>
</dbReference>
<dbReference type="Pfam" id="PF03710">
    <property type="entry name" value="GlnE"/>
    <property type="match status" value="2"/>
</dbReference>
<dbReference type="SUPFAM" id="SSF81301">
    <property type="entry name" value="Nucleotidyltransferase"/>
    <property type="match status" value="2"/>
</dbReference>
<dbReference type="SUPFAM" id="SSF81593">
    <property type="entry name" value="Nucleotidyltransferase substrate binding subunit/domain"/>
    <property type="match status" value="2"/>
</dbReference>
<accession>Q6N8H0</accession>
<name>GLNE_RHOPA</name>
<reference key="1">
    <citation type="journal article" date="2004" name="Nat. Biotechnol.">
        <title>Complete genome sequence of the metabolically versatile photosynthetic bacterium Rhodopseudomonas palustris.</title>
        <authorList>
            <person name="Larimer F.W."/>
            <person name="Chain P."/>
            <person name="Hauser L."/>
            <person name="Lamerdin J.E."/>
            <person name="Malfatti S."/>
            <person name="Do L."/>
            <person name="Land M.L."/>
            <person name="Pelletier D.A."/>
            <person name="Beatty J.T."/>
            <person name="Lang A.S."/>
            <person name="Tabita F.R."/>
            <person name="Gibson J.L."/>
            <person name="Hanson T.E."/>
            <person name="Bobst C."/>
            <person name="Torres y Torres J.L."/>
            <person name="Peres C."/>
            <person name="Harrison F.H."/>
            <person name="Gibson J."/>
            <person name="Harwood C.S."/>
        </authorList>
    </citation>
    <scope>NUCLEOTIDE SEQUENCE [LARGE SCALE GENOMIC DNA]</scope>
    <source>
        <strain>ATCC BAA-98 / CGA009</strain>
    </source>
</reference>
<keyword id="KW-0067">ATP-binding</keyword>
<keyword id="KW-0460">Magnesium</keyword>
<keyword id="KW-0511">Multifunctional enzyme</keyword>
<keyword id="KW-0547">Nucleotide-binding</keyword>
<keyword id="KW-0548">Nucleotidyltransferase</keyword>
<keyword id="KW-0808">Transferase</keyword>
<sequence length="990" mass="109348">MIFSAITADLDNTALAARFGAGPRLYDPVLAAERWAGWLADLAPEQADAIAALGNAFPDLQIALQSIAEASPYLFDLIRGDPVRLLRVLRGAPEQRLAKLLEDAETFVAAASAEDEVMAALRRLKAEAALLIALCDIGGIWPVMQVTQALTDLAGRSVQMALRFLLRQEAGRGRIVPPNPDCPEQGSGLIVLAMGKMGAGELNYSSDIDLIVFYELDAPTLAPDIEPQPFFVRVTQGLSRILQQRRGDGYVFRVDLRLRPDPASTPVALSTVSALDYYEREGRTWERAAMIKARPCAGDLVAGDALLSEIAPFVWRKHLDFAALSDVHDMKRQMQTYRGQTEIAVEGHNVKVGRGGIREIEFFAQTQQLIAGGRHPELRVRPTLEALEILAARNWITLQARDELTEAYLFLRKVEHRVQMIADEQTHALPDTVEAIEQFSRFLGYDSRDSFARDLLGYLERVQGHYAKLFEGDPTGTAKLPPVDYGAGPEDTRLLDHLLSLGYKKPLMIATTLQQWMTGGYRVLKVETTQRAFREFVPALIEELARAEQPDDAVNAFDRLLQALHRGGRLISLLSQNRELLTLVALVLGAAPRLGDMLARQPQILDGLIDPRFFGAMPDQAELSARLAVTLADAGSYEEFLDRLRLFGQESLFLIGTRILSGTVPTQQAAVAFADVAEGIVGTVHGLVSEQFASTYGRVKGQQTAILAMGKLGSREMTASSDLDLILIYDFDDDQPDSDGERSLHGAQYFARFTQRLISAFTTRTNYGVLYDVDMRLRPSGRAGPVASRLDAFAAYQEQEAWTWEHLALTRARVISAPPEFRSRIEQVIRAVLTRQRDAAIIANDVAEMRRAIAQEKGEDDVWDLKYAAGGMVDIDFIAQYLQLVHAHEAPDILHVNTLSALDNATRLGLLAQADAEVLRPAARLYQNLTQILRLCVSEKFNPDTAGDDLLRVMVRAGDAPDFSSLQARVKETQSDVRAIFSRLIGGEDA</sequence>
<comment type="function">
    <text evidence="1">Involved in the regulation of glutamine synthetase GlnA, a key enzyme in the process to assimilate ammonia. When cellular nitrogen levels are high, the C-terminal adenylyl transferase (AT) inactivates GlnA by covalent transfer of an adenylyl group from ATP to specific tyrosine residue of GlnA, thus reducing its activity. Conversely, when nitrogen levels are low, the N-terminal adenylyl removase (AR) activates GlnA by removing the adenylyl group by phosphorolysis, increasing its activity. The regulatory region of GlnE binds the signal transduction protein PII (GlnB) which indicates the nitrogen status of the cell.</text>
</comment>
<comment type="catalytic activity">
    <reaction evidence="1">
        <text>[glutamine synthetase]-O(4)-(5'-adenylyl)-L-tyrosine + phosphate = [glutamine synthetase]-L-tyrosine + ADP</text>
        <dbReference type="Rhea" id="RHEA:43716"/>
        <dbReference type="Rhea" id="RHEA-COMP:10660"/>
        <dbReference type="Rhea" id="RHEA-COMP:10661"/>
        <dbReference type="ChEBI" id="CHEBI:43474"/>
        <dbReference type="ChEBI" id="CHEBI:46858"/>
        <dbReference type="ChEBI" id="CHEBI:83624"/>
        <dbReference type="ChEBI" id="CHEBI:456216"/>
        <dbReference type="EC" id="2.7.7.89"/>
    </reaction>
</comment>
<comment type="catalytic activity">
    <reaction evidence="1">
        <text>[glutamine synthetase]-L-tyrosine + ATP = [glutamine synthetase]-O(4)-(5'-adenylyl)-L-tyrosine + diphosphate</text>
        <dbReference type="Rhea" id="RHEA:18589"/>
        <dbReference type="Rhea" id="RHEA-COMP:10660"/>
        <dbReference type="Rhea" id="RHEA-COMP:10661"/>
        <dbReference type="ChEBI" id="CHEBI:30616"/>
        <dbReference type="ChEBI" id="CHEBI:33019"/>
        <dbReference type="ChEBI" id="CHEBI:46858"/>
        <dbReference type="ChEBI" id="CHEBI:83624"/>
        <dbReference type="EC" id="2.7.7.42"/>
    </reaction>
</comment>
<comment type="cofactor">
    <cofactor evidence="1">
        <name>Mg(2+)</name>
        <dbReference type="ChEBI" id="CHEBI:18420"/>
    </cofactor>
</comment>
<comment type="similarity">
    <text evidence="1">Belongs to the GlnE family.</text>
</comment>
<protein>
    <recommendedName>
        <fullName evidence="1">Bifunctional glutamine synthetase adenylyltransferase/adenylyl-removing enzyme</fullName>
    </recommendedName>
    <alternativeName>
        <fullName evidence="1">ATP:glutamine synthetase adenylyltransferase</fullName>
    </alternativeName>
    <alternativeName>
        <fullName evidence="1">ATase</fullName>
    </alternativeName>
    <domain>
        <recommendedName>
            <fullName evidence="1">Glutamine synthetase adenylyl-L-tyrosine phosphorylase</fullName>
            <ecNumber evidence="1">2.7.7.89</ecNumber>
        </recommendedName>
        <alternativeName>
            <fullName evidence="1">Adenylyl removase</fullName>
            <shortName evidence="1">AR</shortName>
            <shortName evidence="1">AT-N</shortName>
        </alternativeName>
    </domain>
    <domain>
        <recommendedName>
            <fullName evidence="1">Glutamine synthetase adenylyl transferase</fullName>
            <ecNumber evidence="1">2.7.7.42</ecNumber>
        </recommendedName>
        <alternativeName>
            <fullName evidence="1">Adenylyl transferase</fullName>
            <shortName evidence="1">AT</shortName>
            <shortName evidence="1">AT-C</shortName>
        </alternativeName>
    </domain>
</protein>
<feature type="chain" id="PRO_0000209273" description="Bifunctional glutamine synthetase adenylyltransferase/adenylyl-removing enzyme">
    <location>
        <begin position="1"/>
        <end position="990"/>
    </location>
</feature>
<feature type="region of interest" description="Adenylyl removase" evidence="1">
    <location>
        <begin position="1"/>
        <end position="474"/>
    </location>
</feature>
<feature type="region of interest" description="Adenylyl transferase" evidence="1">
    <location>
        <begin position="478"/>
        <end position="990"/>
    </location>
</feature>